<feature type="chain" id="PRO_0000098730" description="Tryptophan synthase alpha chain">
    <location>
        <begin position="1"/>
        <end position="284"/>
    </location>
</feature>
<feature type="active site" description="Proton acceptor" evidence="1">
    <location>
        <position position="59"/>
    </location>
</feature>
<feature type="active site" description="Proton acceptor" evidence="1">
    <location>
        <position position="70"/>
    </location>
</feature>
<gene>
    <name evidence="1" type="primary">trpA</name>
</gene>
<proteinExistence type="inferred from homology"/>
<comment type="function">
    <text evidence="1">The alpha subunit is responsible for the aldol cleavage of indoleglycerol phosphate to indole and glyceraldehyde 3-phosphate.</text>
</comment>
<comment type="catalytic activity">
    <reaction evidence="1">
        <text>(1S,2R)-1-C-(indol-3-yl)glycerol 3-phosphate + L-serine = D-glyceraldehyde 3-phosphate + L-tryptophan + H2O</text>
        <dbReference type="Rhea" id="RHEA:10532"/>
        <dbReference type="ChEBI" id="CHEBI:15377"/>
        <dbReference type="ChEBI" id="CHEBI:33384"/>
        <dbReference type="ChEBI" id="CHEBI:57912"/>
        <dbReference type="ChEBI" id="CHEBI:58866"/>
        <dbReference type="ChEBI" id="CHEBI:59776"/>
        <dbReference type="EC" id="4.2.1.20"/>
    </reaction>
</comment>
<comment type="pathway">
    <text evidence="1">Amino-acid biosynthesis; L-tryptophan biosynthesis; L-tryptophan from chorismate: step 5/5.</text>
</comment>
<comment type="subunit">
    <text evidence="1">Tetramer of two alpha and two beta chains.</text>
</comment>
<comment type="similarity">
    <text evidence="1">Belongs to the TrpA family.</text>
</comment>
<accession>Q9LAG8</accession>
<protein>
    <recommendedName>
        <fullName evidence="1">Tryptophan synthase alpha chain</fullName>
        <ecNumber evidence="1">4.2.1.20</ecNumber>
    </recommendedName>
</protein>
<sequence>MSALNDKSVDNGRIARRFAALKAEGRAGLVTFITAGDPDLETCRAVLHGLPAAGADLIELGLPFSDPMADGPAIQAASLRALHAGTTARKTLDLVRGFRETDADTPVILMGYYNPIHAYGVDRFLADAIEAGVDGLIVVDLPPEEDEELCIPALKAGVNFIRLATPTTDDKRLPAVLQNTSGFVYYVSIAGITGAASADNAAVGAAVERLKRHTDLPVAVGFGIKTPEQAAEVARVADAAVVGSAIVTRLAGGLDADGKARPGLAEDVLGFVRELAGGVRGAAF</sequence>
<keyword id="KW-0028">Amino-acid biosynthesis</keyword>
<keyword id="KW-0057">Aromatic amino acid biosynthesis</keyword>
<keyword id="KW-0456">Lyase</keyword>
<keyword id="KW-0822">Tryptophan biosynthesis</keyword>
<dbReference type="EC" id="4.2.1.20" evidence="1"/>
<dbReference type="EMBL" id="AF139661">
    <property type="protein sequence ID" value="AAF61458.1"/>
    <property type="molecule type" value="Genomic_DNA"/>
</dbReference>
<dbReference type="SMR" id="Q9LAG8"/>
<dbReference type="UniPathway" id="UPA00035">
    <property type="reaction ID" value="UER00044"/>
</dbReference>
<dbReference type="GO" id="GO:0005829">
    <property type="term" value="C:cytosol"/>
    <property type="evidence" value="ECO:0007669"/>
    <property type="project" value="TreeGrafter"/>
</dbReference>
<dbReference type="GO" id="GO:0004834">
    <property type="term" value="F:tryptophan synthase activity"/>
    <property type="evidence" value="ECO:0007669"/>
    <property type="project" value="UniProtKB-UniRule"/>
</dbReference>
<dbReference type="CDD" id="cd04724">
    <property type="entry name" value="Tryptophan_synthase_alpha"/>
    <property type="match status" value="1"/>
</dbReference>
<dbReference type="FunFam" id="3.20.20.70:FF:000037">
    <property type="entry name" value="Tryptophan synthase alpha chain"/>
    <property type="match status" value="1"/>
</dbReference>
<dbReference type="Gene3D" id="3.20.20.70">
    <property type="entry name" value="Aldolase class I"/>
    <property type="match status" value="1"/>
</dbReference>
<dbReference type="HAMAP" id="MF_00131">
    <property type="entry name" value="Trp_synth_alpha"/>
    <property type="match status" value="1"/>
</dbReference>
<dbReference type="InterPro" id="IPR013785">
    <property type="entry name" value="Aldolase_TIM"/>
</dbReference>
<dbReference type="InterPro" id="IPR011060">
    <property type="entry name" value="RibuloseP-bd_barrel"/>
</dbReference>
<dbReference type="InterPro" id="IPR018204">
    <property type="entry name" value="Trp_synthase_alpha_AS"/>
</dbReference>
<dbReference type="InterPro" id="IPR002028">
    <property type="entry name" value="Trp_synthase_suA"/>
</dbReference>
<dbReference type="NCBIfam" id="TIGR00262">
    <property type="entry name" value="trpA"/>
    <property type="match status" value="1"/>
</dbReference>
<dbReference type="PANTHER" id="PTHR43406:SF1">
    <property type="entry name" value="TRYPTOPHAN SYNTHASE ALPHA CHAIN, CHLOROPLASTIC"/>
    <property type="match status" value="1"/>
</dbReference>
<dbReference type="PANTHER" id="PTHR43406">
    <property type="entry name" value="TRYPTOPHAN SYNTHASE, ALPHA CHAIN"/>
    <property type="match status" value="1"/>
</dbReference>
<dbReference type="Pfam" id="PF00290">
    <property type="entry name" value="Trp_syntA"/>
    <property type="match status" value="1"/>
</dbReference>
<dbReference type="SUPFAM" id="SSF51366">
    <property type="entry name" value="Ribulose-phoshate binding barrel"/>
    <property type="match status" value="1"/>
</dbReference>
<dbReference type="PROSITE" id="PS00167">
    <property type="entry name" value="TRP_SYNTHASE_ALPHA"/>
    <property type="match status" value="1"/>
</dbReference>
<name>TRPA_AZOBR</name>
<evidence type="ECO:0000255" key="1">
    <source>
        <dbReference type="HAMAP-Rule" id="MF_00131"/>
    </source>
</evidence>
<organism>
    <name type="scientific">Azospirillum brasilense</name>
    <dbReference type="NCBI Taxonomy" id="192"/>
    <lineage>
        <taxon>Bacteria</taxon>
        <taxon>Pseudomonadati</taxon>
        <taxon>Pseudomonadota</taxon>
        <taxon>Alphaproteobacteria</taxon>
        <taxon>Rhodospirillales</taxon>
        <taxon>Azospirillaceae</taxon>
        <taxon>Azospirillum</taxon>
    </lineage>
</organism>
<reference key="1">
    <citation type="journal article" date="2000" name="DNA Seq.">
        <title>Isolation and sequence analysis of the trpBA gene cluster, encoding tryptophan synthase, from Azospirillum brasilense.</title>
        <authorList>
            <person name="Dosselaere F."/>
            <person name="Lambrecht M."/>
            <person name="Vanderleyden J."/>
        </authorList>
    </citation>
    <scope>NUCLEOTIDE SEQUENCE [GENOMIC DNA]</scope>
    <source>
        <strain>ATCC 29145 / DSM 1690 / IMET 11303 / Sp7</strain>
    </source>
</reference>